<name>DNLJ_LEPIC</name>
<evidence type="ECO:0000255" key="1">
    <source>
        <dbReference type="HAMAP-Rule" id="MF_01588"/>
    </source>
</evidence>
<proteinExistence type="inferred from homology"/>
<keyword id="KW-0227">DNA damage</keyword>
<keyword id="KW-0234">DNA repair</keyword>
<keyword id="KW-0235">DNA replication</keyword>
<keyword id="KW-0436">Ligase</keyword>
<keyword id="KW-0460">Magnesium</keyword>
<keyword id="KW-0464">Manganese</keyword>
<keyword id="KW-0479">Metal-binding</keyword>
<keyword id="KW-0520">NAD</keyword>
<keyword id="KW-0862">Zinc</keyword>
<accession>Q72MA6</accession>
<protein>
    <recommendedName>
        <fullName evidence="1">DNA ligase</fullName>
        <ecNumber evidence="1">6.5.1.2</ecNumber>
    </recommendedName>
    <alternativeName>
        <fullName evidence="1">Polydeoxyribonucleotide synthase [NAD(+)]</fullName>
    </alternativeName>
</protein>
<sequence length="681" mass="76913">MPKKKEDSQKTLSEKEAKGLIAKLSDEIRHHQYLYYVKNDPKISDFDFDQLFRRLQDLEEEFPQFKDLASPTLVVGSDLDKDFEKFQHKLPVLSLINTYNDNELLEWVNKTDPEGLYSVEWKIDGASIVLYYENGILKNGVTRGSGGIGDDVTDNIRTIRNIPLRLPEPITVYLRGEVFMTFKDFEEFNALSSGKYANPRNLSAGSIKQKNSSDTAKRPLRIFTYDATFPNMEKKFKTHQEIFSKLEKLTFPVPPNTAFVSGSKIAKTIQEFKKQKDSLGFPTDGLVIKLNDISKRDALGYTSHSPRWARAYKFDAIMKESKIVDITYAVGRTGKITPRAEIEPISLAGTTVTFATLHNQDYIDELGVGIGAIVRVAKRGEIIPAVEEVVTPGKEVFKIPDRCPSCNTQTIKKESLVDLFCPNPDCPDRVKNGIIFYCQRKQMDIEGLGDKQIEFLYDHDYIKSIADLYDLKDQKEKLMEEEGFGEKSVNIILKGIEQSKQKDFRFLLPSLGLSELGHKVTELLIEHGIDSIDEILSIAKDQKKIESLLEIPGIGPSTIQAFQENFSDKRILKLIERLKKAGLKMKADPIQVADQQPFAGQSWCVTGSFENFQPRDKAMDLIVYYGGRKVSAVSSKTTHLLAGPGAGSKLEKANELGVSVYDEKQFLDLLKSLKIDFKNLI</sequence>
<organism>
    <name type="scientific">Leptospira interrogans serogroup Icterohaemorrhagiae serovar copenhageni (strain Fiocruz L1-130)</name>
    <dbReference type="NCBI Taxonomy" id="267671"/>
    <lineage>
        <taxon>Bacteria</taxon>
        <taxon>Pseudomonadati</taxon>
        <taxon>Spirochaetota</taxon>
        <taxon>Spirochaetia</taxon>
        <taxon>Leptospirales</taxon>
        <taxon>Leptospiraceae</taxon>
        <taxon>Leptospira</taxon>
    </lineage>
</organism>
<reference key="1">
    <citation type="journal article" date="2004" name="J. Bacteriol.">
        <title>Comparative genomics of two Leptospira interrogans serovars reveals novel insights into physiology and pathogenesis.</title>
        <authorList>
            <person name="Nascimento A.L.T.O."/>
            <person name="Ko A.I."/>
            <person name="Martins E.A.L."/>
            <person name="Monteiro-Vitorello C.B."/>
            <person name="Ho P.L."/>
            <person name="Haake D.A."/>
            <person name="Verjovski-Almeida S."/>
            <person name="Hartskeerl R.A."/>
            <person name="Marques M.V."/>
            <person name="Oliveira M.C."/>
            <person name="Menck C.F.M."/>
            <person name="Leite L.C.C."/>
            <person name="Carrer H."/>
            <person name="Coutinho L.L."/>
            <person name="Degrave W.M."/>
            <person name="Dellagostin O.A."/>
            <person name="El-Dorry H."/>
            <person name="Ferro E.S."/>
            <person name="Ferro M.I.T."/>
            <person name="Furlan L.R."/>
            <person name="Gamberini M."/>
            <person name="Giglioti E.A."/>
            <person name="Goes-Neto A."/>
            <person name="Goldman G.H."/>
            <person name="Goldman M.H.S."/>
            <person name="Harakava R."/>
            <person name="Jeronimo S.M.B."/>
            <person name="Junqueira-de-Azevedo I.L.M."/>
            <person name="Kimura E.T."/>
            <person name="Kuramae E.E."/>
            <person name="Lemos E.G.M."/>
            <person name="Lemos M.V.F."/>
            <person name="Marino C.L."/>
            <person name="Nunes L.R."/>
            <person name="de Oliveira R.C."/>
            <person name="Pereira G.G."/>
            <person name="Reis M.S."/>
            <person name="Schriefer A."/>
            <person name="Siqueira W.J."/>
            <person name="Sommer P."/>
            <person name="Tsai S.M."/>
            <person name="Simpson A.J.G."/>
            <person name="Ferro J.A."/>
            <person name="Camargo L.E.A."/>
            <person name="Kitajima J.P."/>
            <person name="Setubal J.C."/>
            <person name="Van Sluys M.A."/>
        </authorList>
    </citation>
    <scope>NUCLEOTIDE SEQUENCE [LARGE SCALE GENOMIC DNA]</scope>
    <source>
        <strain>Fiocruz L1-130</strain>
    </source>
</reference>
<feature type="chain" id="PRO_0000313293" description="DNA ligase">
    <location>
        <begin position="1"/>
        <end position="681"/>
    </location>
</feature>
<feature type="domain" description="BRCT" evidence="1">
    <location>
        <begin position="593"/>
        <end position="681"/>
    </location>
</feature>
<feature type="active site" description="N6-AMP-lysine intermediate" evidence="1">
    <location>
        <position position="122"/>
    </location>
</feature>
<feature type="binding site" evidence="1">
    <location>
        <begin position="45"/>
        <end position="49"/>
    </location>
    <ligand>
        <name>NAD(+)</name>
        <dbReference type="ChEBI" id="CHEBI:57540"/>
    </ligand>
</feature>
<feature type="binding site" evidence="1">
    <location>
        <begin position="94"/>
        <end position="95"/>
    </location>
    <ligand>
        <name>NAD(+)</name>
        <dbReference type="ChEBI" id="CHEBI:57540"/>
    </ligand>
</feature>
<feature type="binding site" evidence="1">
    <location>
        <position position="120"/>
    </location>
    <ligand>
        <name>NAD(+)</name>
        <dbReference type="ChEBI" id="CHEBI:57540"/>
    </ligand>
</feature>
<feature type="binding site" evidence="1">
    <location>
        <position position="143"/>
    </location>
    <ligand>
        <name>NAD(+)</name>
        <dbReference type="ChEBI" id="CHEBI:57540"/>
    </ligand>
</feature>
<feature type="binding site" evidence="1">
    <location>
        <position position="177"/>
    </location>
    <ligand>
        <name>NAD(+)</name>
        <dbReference type="ChEBI" id="CHEBI:57540"/>
    </ligand>
</feature>
<feature type="binding site" evidence="1">
    <location>
        <position position="289"/>
    </location>
    <ligand>
        <name>NAD(+)</name>
        <dbReference type="ChEBI" id="CHEBI:57540"/>
    </ligand>
</feature>
<feature type="binding site" evidence="1">
    <location>
        <position position="313"/>
    </location>
    <ligand>
        <name>NAD(+)</name>
        <dbReference type="ChEBI" id="CHEBI:57540"/>
    </ligand>
</feature>
<feature type="binding site" evidence="1">
    <location>
        <position position="403"/>
    </location>
    <ligand>
        <name>Zn(2+)</name>
        <dbReference type="ChEBI" id="CHEBI:29105"/>
    </ligand>
</feature>
<feature type="binding site" evidence="1">
    <location>
        <position position="406"/>
    </location>
    <ligand>
        <name>Zn(2+)</name>
        <dbReference type="ChEBI" id="CHEBI:29105"/>
    </ligand>
</feature>
<feature type="binding site" evidence="1">
    <location>
        <position position="421"/>
    </location>
    <ligand>
        <name>Zn(2+)</name>
        <dbReference type="ChEBI" id="CHEBI:29105"/>
    </ligand>
</feature>
<feature type="binding site" evidence="1">
    <location>
        <position position="426"/>
    </location>
    <ligand>
        <name>Zn(2+)</name>
        <dbReference type="ChEBI" id="CHEBI:29105"/>
    </ligand>
</feature>
<dbReference type="EC" id="6.5.1.2" evidence="1"/>
<dbReference type="EMBL" id="AE016823">
    <property type="protein sequence ID" value="AAS71826.1"/>
    <property type="molecule type" value="Genomic_DNA"/>
</dbReference>
<dbReference type="RefSeq" id="WP_001124828.1">
    <property type="nucleotide sequence ID" value="NC_005823.1"/>
</dbReference>
<dbReference type="SMR" id="Q72MA6"/>
<dbReference type="GeneID" id="61143149"/>
<dbReference type="KEGG" id="lic:LIC_13282"/>
<dbReference type="HOGENOM" id="CLU_007764_2_1_12"/>
<dbReference type="Proteomes" id="UP000007037">
    <property type="component" value="Chromosome I"/>
</dbReference>
<dbReference type="GO" id="GO:0005829">
    <property type="term" value="C:cytosol"/>
    <property type="evidence" value="ECO:0007669"/>
    <property type="project" value="TreeGrafter"/>
</dbReference>
<dbReference type="GO" id="GO:0003911">
    <property type="term" value="F:DNA ligase (NAD+) activity"/>
    <property type="evidence" value="ECO:0007669"/>
    <property type="project" value="UniProtKB-UniRule"/>
</dbReference>
<dbReference type="GO" id="GO:0046872">
    <property type="term" value="F:metal ion binding"/>
    <property type="evidence" value="ECO:0007669"/>
    <property type="project" value="UniProtKB-KW"/>
</dbReference>
<dbReference type="GO" id="GO:0006281">
    <property type="term" value="P:DNA repair"/>
    <property type="evidence" value="ECO:0007669"/>
    <property type="project" value="UniProtKB-KW"/>
</dbReference>
<dbReference type="GO" id="GO:0006260">
    <property type="term" value="P:DNA replication"/>
    <property type="evidence" value="ECO:0007669"/>
    <property type="project" value="UniProtKB-KW"/>
</dbReference>
<dbReference type="CDD" id="cd17748">
    <property type="entry name" value="BRCT_DNA_ligase_like"/>
    <property type="match status" value="1"/>
</dbReference>
<dbReference type="CDD" id="cd00114">
    <property type="entry name" value="LIGANc"/>
    <property type="match status" value="1"/>
</dbReference>
<dbReference type="FunFam" id="1.10.150.20:FF:000007">
    <property type="entry name" value="DNA ligase"/>
    <property type="match status" value="1"/>
</dbReference>
<dbReference type="FunFam" id="3.30.470.30:FF:000026">
    <property type="entry name" value="DNA ligase"/>
    <property type="match status" value="1"/>
</dbReference>
<dbReference type="FunFam" id="3.40.50.10190:FF:000087">
    <property type="entry name" value="DNA ligase"/>
    <property type="match status" value="1"/>
</dbReference>
<dbReference type="Gene3D" id="6.20.10.30">
    <property type="match status" value="1"/>
</dbReference>
<dbReference type="Gene3D" id="1.10.150.20">
    <property type="entry name" value="5' to 3' exonuclease, C-terminal subdomain"/>
    <property type="match status" value="2"/>
</dbReference>
<dbReference type="Gene3D" id="3.40.50.10190">
    <property type="entry name" value="BRCT domain"/>
    <property type="match status" value="1"/>
</dbReference>
<dbReference type="Gene3D" id="3.30.470.30">
    <property type="entry name" value="DNA ligase/mRNA capping enzyme"/>
    <property type="match status" value="1"/>
</dbReference>
<dbReference type="Gene3D" id="1.10.287.610">
    <property type="entry name" value="Helix hairpin bin"/>
    <property type="match status" value="1"/>
</dbReference>
<dbReference type="Gene3D" id="2.40.50.140">
    <property type="entry name" value="Nucleic acid-binding proteins"/>
    <property type="match status" value="1"/>
</dbReference>
<dbReference type="HAMAP" id="MF_01588">
    <property type="entry name" value="DNA_ligase_A"/>
    <property type="match status" value="1"/>
</dbReference>
<dbReference type="InterPro" id="IPR001357">
    <property type="entry name" value="BRCT_dom"/>
</dbReference>
<dbReference type="InterPro" id="IPR036420">
    <property type="entry name" value="BRCT_dom_sf"/>
</dbReference>
<dbReference type="InterPro" id="IPR001679">
    <property type="entry name" value="DNA_ligase"/>
</dbReference>
<dbReference type="InterPro" id="IPR013839">
    <property type="entry name" value="DNAligase_adenylation"/>
</dbReference>
<dbReference type="InterPro" id="IPR013840">
    <property type="entry name" value="DNAligase_N"/>
</dbReference>
<dbReference type="InterPro" id="IPR012340">
    <property type="entry name" value="NA-bd_OB-fold"/>
</dbReference>
<dbReference type="InterPro" id="IPR004150">
    <property type="entry name" value="NAD_DNA_ligase_OB"/>
</dbReference>
<dbReference type="InterPro" id="IPR010994">
    <property type="entry name" value="RuvA_2-like"/>
</dbReference>
<dbReference type="InterPro" id="IPR004149">
    <property type="entry name" value="Znf_DNAligase_C4"/>
</dbReference>
<dbReference type="NCBIfam" id="TIGR00575">
    <property type="entry name" value="dnlj"/>
    <property type="match status" value="1"/>
</dbReference>
<dbReference type="NCBIfam" id="NF005932">
    <property type="entry name" value="PRK07956.1"/>
    <property type="match status" value="1"/>
</dbReference>
<dbReference type="PANTHER" id="PTHR23389">
    <property type="entry name" value="CHROMOSOME TRANSMISSION FIDELITY FACTOR 18"/>
    <property type="match status" value="1"/>
</dbReference>
<dbReference type="PANTHER" id="PTHR23389:SF9">
    <property type="entry name" value="DNA LIGASE"/>
    <property type="match status" value="1"/>
</dbReference>
<dbReference type="Pfam" id="PF00533">
    <property type="entry name" value="BRCT"/>
    <property type="match status" value="1"/>
</dbReference>
<dbReference type="Pfam" id="PF01653">
    <property type="entry name" value="DNA_ligase_aden"/>
    <property type="match status" value="1"/>
</dbReference>
<dbReference type="Pfam" id="PF03120">
    <property type="entry name" value="DNA_ligase_OB"/>
    <property type="match status" value="1"/>
</dbReference>
<dbReference type="Pfam" id="PF03119">
    <property type="entry name" value="DNA_ligase_ZBD"/>
    <property type="match status" value="1"/>
</dbReference>
<dbReference type="Pfam" id="PF14520">
    <property type="entry name" value="HHH_5"/>
    <property type="match status" value="1"/>
</dbReference>
<dbReference type="Pfam" id="PF22745">
    <property type="entry name" value="Nlig-Ia"/>
    <property type="match status" value="1"/>
</dbReference>
<dbReference type="PIRSF" id="PIRSF001604">
    <property type="entry name" value="LigA"/>
    <property type="match status" value="1"/>
</dbReference>
<dbReference type="SMART" id="SM00292">
    <property type="entry name" value="BRCT"/>
    <property type="match status" value="1"/>
</dbReference>
<dbReference type="SMART" id="SM00532">
    <property type="entry name" value="LIGANc"/>
    <property type="match status" value="1"/>
</dbReference>
<dbReference type="SUPFAM" id="SSF52113">
    <property type="entry name" value="BRCT domain"/>
    <property type="match status" value="1"/>
</dbReference>
<dbReference type="SUPFAM" id="SSF56091">
    <property type="entry name" value="DNA ligase/mRNA capping enzyme, catalytic domain"/>
    <property type="match status" value="1"/>
</dbReference>
<dbReference type="SUPFAM" id="SSF50249">
    <property type="entry name" value="Nucleic acid-binding proteins"/>
    <property type="match status" value="1"/>
</dbReference>
<dbReference type="SUPFAM" id="SSF47781">
    <property type="entry name" value="RuvA domain 2-like"/>
    <property type="match status" value="1"/>
</dbReference>
<dbReference type="PROSITE" id="PS50172">
    <property type="entry name" value="BRCT"/>
    <property type="match status" value="1"/>
</dbReference>
<comment type="function">
    <text evidence="1">DNA ligase that catalyzes the formation of phosphodiester linkages between 5'-phosphoryl and 3'-hydroxyl groups in double-stranded DNA using NAD as a coenzyme and as the energy source for the reaction. It is essential for DNA replication and repair of damaged DNA.</text>
</comment>
<comment type="catalytic activity">
    <reaction evidence="1">
        <text>NAD(+) + (deoxyribonucleotide)n-3'-hydroxyl + 5'-phospho-(deoxyribonucleotide)m = (deoxyribonucleotide)n+m + AMP + beta-nicotinamide D-nucleotide.</text>
        <dbReference type="EC" id="6.5.1.2"/>
    </reaction>
</comment>
<comment type="cofactor">
    <cofactor evidence="1">
        <name>Mg(2+)</name>
        <dbReference type="ChEBI" id="CHEBI:18420"/>
    </cofactor>
    <cofactor evidence="1">
        <name>Mn(2+)</name>
        <dbReference type="ChEBI" id="CHEBI:29035"/>
    </cofactor>
</comment>
<comment type="similarity">
    <text evidence="1">Belongs to the NAD-dependent DNA ligase family. LigA subfamily.</text>
</comment>
<gene>
    <name evidence="1" type="primary">ligA</name>
    <name type="ordered locus">LIC_13282</name>
</gene>